<evidence type="ECO:0000255" key="1">
    <source>
        <dbReference type="HAMAP-Rule" id="MF_03061"/>
    </source>
</evidence>
<evidence type="ECO:0000305" key="2"/>
<protein>
    <recommendedName>
        <fullName evidence="1">Elongation factor G, mitochondrial</fullName>
        <shortName evidence="1">EF-Gmt</shortName>
    </recommendedName>
    <alternativeName>
        <fullName evidence="1">Elongation factor G 1, mitochondrial</fullName>
        <shortName evidence="1">mEF-G 1</shortName>
    </alternativeName>
    <alternativeName>
        <fullName evidence="1">Elongation factor G1</fullName>
    </alternativeName>
    <alternativeName>
        <fullName>Protein iconoclast</fullName>
    </alternativeName>
</protein>
<accession>B3MK91</accession>
<dbReference type="EMBL" id="CH902620">
    <property type="protein sequence ID" value="EDV32475.1"/>
    <property type="molecule type" value="Genomic_DNA"/>
</dbReference>
<dbReference type="SMR" id="B3MK91"/>
<dbReference type="FunCoup" id="B3MK91">
    <property type="interactions" value="2158"/>
</dbReference>
<dbReference type="STRING" id="7217.B3MK91"/>
<dbReference type="EnsemblMetazoa" id="FBtr0118734">
    <property type="protein sequence ID" value="FBpp0117226"/>
    <property type="gene ID" value="FBgn0091061"/>
</dbReference>
<dbReference type="EnsemblMetazoa" id="XM_001963218.4">
    <property type="protein sequence ID" value="XP_001963254.1"/>
    <property type="gene ID" value="LOC6496862"/>
</dbReference>
<dbReference type="GeneID" id="6496862"/>
<dbReference type="KEGG" id="dan:6496862"/>
<dbReference type="CTD" id="34004"/>
<dbReference type="eggNOG" id="KOG0465">
    <property type="taxonomic scope" value="Eukaryota"/>
</dbReference>
<dbReference type="HOGENOM" id="CLU_002794_4_1_1"/>
<dbReference type="InParanoid" id="B3MK91"/>
<dbReference type="OMA" id="GQFAKVQ"/>
<dbReference type="OrthoDB" id="198619at2759"/>
<dbReference type="PhylomeDB" id="B3MK91"/>
<dbReference type="UniPathway" id="UPA00345"/>
<dbReference type="Proteomes" id="UP000007801">
    <property type="component" value="Unassembled WGS sequence"/>
</dbReference>
<dbReference type="GO" id="GO:0005739">
    <property type="term" value="C:mitochondrion"/>
    <property type="evidence" value="ECO:0007669"/>
    <property type="project" value="UniProtKB-SubCell"/>
</dbReference>
<dbReference type="GO" id="GO:0005634">
    <property type="term" value="C:nucleus"/>
    <property type="evidence" value="ECO:0007669"/>
    <property type="project" value="EnsemblMetazoa"/>
</dbReference>
<dbReference type="GO" id="GO:0005525">
    <property type="term" value="F:GTP binding"/>
    <property type="evidence" value="ECO:0007669"/>
    <property type="project" value="UniProtKB-UniRule"/>
</dbReference>
<dbReference type="GO" id="GO:0003924">
    <property type="term" value="F:GTPase activity"/>
    <property type="evidence" value="ECO:0000250"/>
    <property type="project" value="UniProtKB"/>
</dbReference>
<dbReference type="GO" id="GO:0003746">
    <property type="term" value="F:translation elongation factor activity"/>
    <property type="evidence" value="ECO:0000250"/>
    <property type="project" value="UniProtKB"/>
</dbReference>
<dbReference type="GO" id="GO:0070125">
    <property type="term" value="P:mitochondrial translational elongation"/>
    <property type="evidence" value="ECO:0000250"/>
    <property type="project" value="UniProtKB"/>
</dbReference>
<dbReference type="CDD" id="cd01886">
    <property type="entry name" value="EF-G"/>
    <property type="match status" value="1"/>
</dbReference>
<dbReference type="CDD" id="cd16262">
    <property type="entry name" value="EFG_III"/>
    <property type="match status" value="1"/>
</dbReference>
<dbReference type="CDD" id="cd01434">
    <property type="entry name" value="EFG_mtEFG1_IV"/>
    <property type="match status" value="1"/>
</dbReference>
<dbReference type="CDD" id="cd04097">
    <property type="entry name" value="mtEFG1_C"/>
    <property type="match status" value="1"/>
</dbReference>
<dbReference type="CDD" id="cd04091">
    <property type="entry name" value="mtEFG1_II_like"/>
    <property type="match status" value="1"/>
</dbReference>
<dbReference type="FunFam" id="3.30.230.10:FF:000003">
    <property type="entry name" value="Elongation factor G"/>
    <property type="match status" value="1"/>
</dbReference>
<dbReference type="FunFam" id="3.30.70.240:FF:000001">
    <property type="entry name" value="Elongation factor G"/>
    <property type="match status" value="1"/>
</dbReference>
<dbReference type="FunFam" id="3.30.70.870:FF:000001">
    <property type="entry name" value="Elongation factor G"/>
    <property type="match status" value="1"/>
</dbReference>
<dbReference type="FunFam" id="2.40.30.10:FF:000022">
    <property type="entry name" value="Elongation factor G, mitochondrial"/>
    <property type="match status" value="1"/>
</dbReference>
<dbReference type="FunFam" id="3.40.50.300:FF:000539">
    <property type="entry name" value="Elongation factor G, mitochondrial"/>
    <property type="match status" value="1"/>
</dbReference>
<dbReference type="Gene3D" id="3.30.230.10">
    <property type="match status" value="1"/>
</dbReference>
<dbReference type="Gene3D" id="3.30.70.240">
    <property type="match status" value="1"/>
</dbReference>
<dbReference type="Gene3D" id="3.30.70.870">
    <property type="entry name" value="Elongation Factor G (Translational Gtpase), domain 3"/>
    <property type="match status" value="1"/>
</dbReference>
<dbReference type="Gene3D" id="3.40.50.300">
    <property type="entry name" value="P-loop containing nucleotide triphosphate hydrolases"/>
    <property type="match status" value="1"/>
</dbReference>
<dbReference type="Gene3D" id="2.40.30.10">
    <property type="entry name" value="Translation factors"/>
    <property type="match status" value="1"/>
</dbReference>
<dbReference type="HAMAP" id="MF_00054_B">
    <property type="entry name" value="EF_G_EF_2_B"/>
    <property type="match status" value="1"/>
</dbReference>
<dbReference type="InterPro" id="IPR041095">
    <property type="entry name" value="EFG_II"/>
</dbReference>
<dbReference type="InterPro" id="IPR009022">
    <property type="entry name" value="EFG_III"/>
</dbReference>
<dbReference type="InterPro" id="IPR035647">
    <property type="entry name" value="EFG_III/V"/>
</dbReference>
<dbReference type="InterPro" id="IPR047872">
    <property type="entry name" value="EFG_IV"/>
</dbReference>
<dbReference type="InterPro" id="IPR035649">
    <property type="entry name" value="EFG_V"/>
</dbReference>
<dbReference type="InterPro" id="IPR000640">
    <property type="entry name" value="EFG_V-like"/>
</dbReference>
<dbReference type="InterPro" id="IPR004161">
    <property type="entry name" value="EFTu-like_2"/>
</dbReference>
<dbReference type="InterPro" id="IPR031157">
    <property type="entry name" value="G_TR_CS"/>
</dbReference>
<dbReference type="InterPro" id="IPR027417">
    <property type="entry name" value="P-loop_NTPase"/>
</dbReference>
<dbReference type="InterPro" id="IPR020568">
    <property type="entry name" value="Ribosomal_Su5_D2-typ_SF"/>
</dbReference>
<dbReference type="InterPro" id="IPR014721">
    <property type="entry name" value="Ribsml_uS5_D2-typ_fold_subgr"/>
</dbReference>
<dbReference type="InterPro" id="IPR005225">
    <property type="entry name" value="Small_GTP-bd"/>
</dbReference>
<dbReference type="InterPro" id="IPR000795">
    <property type="entry name" value="T_Tr_GTP-bd_dom"/>
</dbReference>
<dbReference type="InterPro" id="IPR009000">
    <property type="entry name" value="Transl_B-barrel_sf"/>
</dbReference>
<dbReference type="InterPro" id="IPR004540">
    <property type="entry name" value="Transl_elong_EFG/EF2"/>
</dbReference>
<dbReference type="InterPro" id="IPR005517">
    <property type="entry name" value="Transl_elong_EFG/EF2_IV"/>
</dbReference>
<dbReference type="NCBIfam" id="TIGR00484">
    <property type="entry name" value="EF-G"/>
    <property type="match status" value="1"/>
</dbReference>
<dbReference type="NCBIfam" id="NF009381">
    <property type="entry name" value="PRK12740.1-5"/>
    <property type="match status" value="1"/>
</dbReference>
<dbReference type="NCBIfam" id="TIGR00231">
    <property type="entry name" value="small_GTP"/>
    <property type="match status" value="1"/>
</dbReference>
<dbReference type="PANTHER" id="PTHR43636">
    <property type="entry name" value="ELONGATION FACTOR G, MITOCHONDRIAL"/>
    <property type="match status" value="1"/>
</dbReference>
<dbReference type="PANTHER" id="PTHR43636:SF2">
    <property type="entry name" value="ELONGATION FACTOR G, MITOCHONDRIAL"/>
    <property type="match status" value="1"/>
</dbReference>
<dbReference type="Pfam" id="PF00679">
    <property type="entry name" value="EFG_C"/>
    <property type="match status" value="1"/>
</dbReference>
<dbReference type="Pfam" id="PF14492">
    <property type="entry name" value="EFG_III"/>
    <property type="match status" value="1"/>
</dbReference>
<dbReference type="Pfam" id="PF03764">
    <property type="entry name" value="EFG_IV"/>
    <property type="match status" value="1"/>
</dbReference>
<dbReference type="Pfam" id="PF00009">
    <property type="entry name" value="GTP_EFTU"/>
    <property type="match status" value="1"/>
</dbReference>
<dbReference type="Pfam" id="PF03144">
    <property type="entry name" value="GTP_EFTU_D2"/>
    <property type="match status" value="1"/>
</dbReference>
<dbReference type="PRINTS" id="PR00315">
    <property type="entry name" value="ELONGATNFCT"/>
</dbReference>
<dbReference type="SMART" id="SM00838">
    <property type="entry name" value="EFG_C"/>
    <property type="match status" value="1"/>
</dbReference>
<dbReference type="SMART" id="SM00889">
    <property type="entry name" value="EFG_IV"/>
    <property type="match status" value="1"/>
</dbReference>
<dbReference type="SUPFAM" id="SSF54980">
    <property type="entry name" value="EF-G C-terminal domain-like"/>
    <property type="match status" value="2"/>
</dbReference>
<dbReference type="SUPFAM" id="SSF52540">
    <property type="entry name" value="P-loop containing nucleoside triphosphate hydrolases"/>
    <property type="match status" value="1"/>
</dbReference>
<dbReference type="SUPFAM" id="SSF54211">
    <property type="entry name" value="Ribosomal protein S5 domain 2-like"/>
    <property type="match status" value="1"/>
</dbReference>
<dbReference type="SUPFAM" id="SSF50447">
    <property type="entry name" value="Translation proteins"/>
    <property type="match status" value="1"/>
</dbReference>
<dbReference type="PROSITE" id="PS00301">
    <property type="entry name" value="G_TR_1"/>
    <property type="match status" value="1"/>
</dbReference>
<dbReference type="PROSITE" id="PS51722">
    <property type="entry name" value="G_TR_2"/>
    <property type="match status" value="1"/>
</dbReference>
<gene>
    <name type="primary">ico</name>
    <name type="ORF">GF14034</name>
</gene>
<reference key="1">
    <citation type="journal article" date="2007" name="Nature">
        <title>Evolution of genes and genomes on the Drosophila phylogeny.</title>
        <authorList>
            <consortium name="Drosophila 12 genomes consortium"/>
        </authorList>
    </citation>
    <scope>NUCLEOTIDE SEQUENCE [LARGE SCALE GENOMIC DNA]</scope>
    <source>
        <strain>Tucson 14024-0371.13</strain>
    </source>
</reference>
<feature type="transit peptide" description="Mitochondrion" evidence="1">
    <location>
        <begin position="1"/>
        <end position="15"/>
    </location>
</feature>
<feature type="chain" id="PRO_0000385545" description="Elongation factor G, mitochondrial">
    <location>
        <begin position="16"/>
        <end position="745"/>
    </location>
</feature>
<feature type="domain" description="tr-type G">
    <location>
        <begin position="40"/>
        <end position="317"/>
    </location>
</feature>
<feature type="binding site" evidence="1">
    <location>
        <begin position="49"/>
        <end position="56"/>
    </location>
    <ligand>
        <name>GTP</name>
        <dbReference type="ChEBI" id="CHEBI:37565"/>
    </ligand>
</feature>
<feature type="binding site" evidence="1">
    <location>
        <begin position="116"/>
        <end position="120"/>
    </location>
    <ligand>
        <name>GTP</name>
        <dbReference type="ChEBI" id="CHEBI:37565"/>
    </ligand>
</feature>
<feature type="binding site" evidence="1">
    <location>
        <begin position="170"/>
        <end position="173"/>
    </location>
    <ligand>
        <name>GTP</name>
        <dbReference type="ChEBI" id="CHEBI:37565"/>
    </ligand>
</feature>
<name>EFGM_DROAN</name>
<proteinExistence type="inferred from homology"/>
<keyword id="KW-0251">Elongation factor</keyword>
<keyword id="KW-0342">GTP-binding</keyword>
<keyword id="KW-0496">Mitochondrion</keyword>
<keyword id="KW-0547">Nucleotide-binding</keyword>
<keyword id="KW-0648">Protein biosynthesis</keyword>
<keyword id="KW-1185">Reference proteome</keyword>
<keyword id="KW-0809">Transit peptide</keyword>
<sequence>MSLITRLLTASSPLRLRAMETMSRAGYSSHAKYAEHRPIDKIRNIGISAHIDSGKTTLTERILFYTGRIVEMHEVRGKDNVGATMDSMELERQRGITIQSAATYTLWKDTNINIIDTPGHVDFTVEVERALRVLDGAVLVLCAVGGVQSQTLTVNRQMKRYNVPCLAFINKLDRMGSNPYRVLSQMRSKMNHNAAFIQLPIGVESNCKGIVDLVRERAIYFEGEHGMNLRLDEIPQDMRVESQERRQELIEHLSNADDTFGELFLEEKPFTEDDIKAALRRTCIKRTFTPVLVGTALKNKGVQPLLDAVLEYLPNPGEVENLAFVEKEGQDPEKIVLNPARDGKDAFVGLAFKLEAGRFGQLTYLRCYQGVLRKGDNIFNARTNKKVRIARLVRLHSNQMEDVNEVYAGDIFALFGVDCASGDTFTTNPKNNLAMESIFVPEPVVSMAIKPNNTKDRDNFSKAIARFTKEDPTFHFFFDNDVKETLVSGMGELHLEIYAQRMEREYGCPVTLGKPKVAFRETLVGPCEFDYLHKKQSGGSGQYARIIGIMEPLPPNQNTLLEFVDETVGTNVPKQFVPGVEKGYREMAEKGMLSGHKLSGIRFRLQDGGHHIVDSSELAFMLAAHGAIKEVFQNGNWQILEPIMLVEVTAPEEFQGAVMGHLSKRHGIITGTEGTEGWFTVYAEVPLNDMFGYAGELRSSTQGKGEFTMEYSRYSPCLPDVQDQIVRQYQESQGLGQADKKKRKN</sequence>
<comment type="function">
    <text evidence="1">Mitochondrial GTPase that catalyzes the GTP-dependent ribosomal translocation step during translation elongation. During this step, the ribosome changes from the pre-translocational (PRE) to the post-translocational (POST) state as the newly formed A-site-bound peptidyl-tRNA and P-site-bound deacylated tRNA move to the P and E sites, respectively. Catalyzes the coordinated movement of the two tRNA molecules, the mRNA and conformational changes in the ribosome. Essential during development as it acts as a retrograde signal from mitochondria to the nucleus to slow down cell proliferation if mitochondrial energy output is low (By similarity).</text>
</comment>
<comment type="pathway">
    <text evidence="1">Protein biosynthesis; polypeptide chain elongation.</text>
</comment>
<comment type="subcellular location">
    <subcellularLocation>
        <location evidence="1">Mitochondrion</location>
    </subcellularLocation>
</comment>
<comment type="similarity">
    <text evidence="2">Belongs to the TRAFAC class translation factor GTPase superfamily. Classic translation factor GTPase family. EF-G/EF-2 subfamily.</text>
</comment>
<organism>
    <name type="scientific">Drosophila ananassae</name>
    <name type="common">Fruit fly</name>
    <dbReference type="NCBI Taxonomy" id="7217"/>
    <lineage>
        <taxon>Eukaryota</taxon>
        <taxon>Metazoa</taxon>
        <taxon>Ecdysozoa</taxon>
        <taxon>Arthropoda</taxon>
        <taxon>Hexapoda</taxon>
        <taxon>Insecta</taxon>
        <taxon>Pterygota</taxon>
        <taxon>Neoptera</taxon>
        <taxon>Endopterygota</taxon>
        <taxon>Diptera</taxon>
        <taxon>Brachycera</taxon>
        <taxon>Muscomorpha</taxon>
        <taxon>Ephydroidea</taxon>
        <taxon>Drosophilidae</taxon>
        <taxon>Drosophila</taxon>
        <taxon>Sophophora</taxon>
    </lineage>
</organism>